<sequence length="181" mass="19860">MSPMLQIAAEEMENPLIPPIPELVIGLIAFVIVFGFLAKKLLPNINKVLEERREAIEGGIEKAEAAQTEAQSVLEQYKAQLAEARHEGREEAQEQGATLIAEMRAEGQRQREEIIAAGHAQIQADRKAAASALRQDVGKLATELAGKLVGESLEDHARQSRVIDRFLDELDDKATTAEATR</sequence>
<dbReference type="EMBL" id="Z22606">
    <property type="protein sequence ID" value="CAA80323.1"/>
    <property type="molecule type" value="Genomic_DNA"/>
</dbReference>
<dbReference type="PIR" id="S37543">
    <property type="entry name" value="S37543"/>
</dbReference>
<dbReference type="SMR" id="P50013"/>
<dbReference type="GO" id="GO:0005886">
    <property type="term" value="C:plasma membrane"/>
    <property type="evidence" value="ECO:0007669"/>
    <property type="project" value="UniProtKB-SubCell"/>
</dbReference>
<dbReference type="GO" id="GO:0045259">
    <property type="term" value="C:proton-transporting ATP synthase complex"/>
    <property type="evidence" value="ECO:0007669"/>
    <property type="project" value="UniProtKB-KW"/>
</dbReference>
<dbReference type="GO" id="GO:0046933">
    <property type="term" value="F:proton-transporting ATP synthase activity, rotational mechanism"/>
    <property type="evidence" value="ECO:0007669"/>
    <property type="project" value="UniProtKB-UniRule"/>
</dbReference>
<dbReference type="GO" id="GO:0046961">
    <property type="term" value="F:proton-transporting ATPase activity, rotational mechanism"/>
    <property type="evidence" value="ECO:0007669"/>
    <property type="project" value="TreeGrafter"/>
</dbReference>
<dbReference type="CDD" id="cd06503">
    <property type="entry name" value="ATP-synt_Fo_b"/>
    <property type="match status" value="1"/>
</dbReference>
<dbReference type="HAMAP" id="MF_01398">
    <property type="entry name" value="ATP_synth_b_bprime"/>
    <property type="match status" value="1"/>
</dbReference>
<dbReference type="InterPro" id="IPR028987">
    <property type="entry name" value="ATP_synth_B-like_membr_sf"/>
</dbReference>
<dbReference type="InterPro" id="IPR002146">
    <property type="entry name" value="ATP_synth_b/b'su_bac/chlpt"/>
</dbReference>
<dbReference type="InterPro" id="IPR005864">
    <property type="entry name" value="ATP_synth_F0_bsu_bac"/>
</dbReference>
<dbReference type="InterPro" id="IPR050059">
    <property type="entry name" value="ATP_synthase_B_chain"/>
</dbReference>
<dbReference type="NCBIfam" id="TIGR01144">
    <property type="entry name" value="ATP_synt_b"/>
    <property type="match status" value="1"/>
</dbReference>
<dbReference type="NCBIfam" id="NF004412">
    <property type="entry name" value="PRK05759.1-3"/>
    <property type="match status" value="1"/>
</dbReference>
<dbReference type="PANTHER" id="PTHR33445:SF1">
    <property type="entry name" value="ATP SYNTHASE SUBUNIT B"/>
    <property type="match status" value="1"/>
</dbReference>
<dbReference type="PANTHER" id="PTHR33445">
    <property type="entry name" value="ATP SYNTHASE SUBUNIT B', CHLOROPLASTIC"/>
    <property type="match status" value="1"/>
</dbReference>
<dbReference type="Pfam" id="PF00430">
    <property type="entry name" value="ATP-synt_B"/>
    <property type="match status" value="1"/>
</dbReference>
<dbReference type="SUPFAM" id="SSF81573">
    <property type="entry name" value="F1F0 ATP synthase subunit B, membrane domain"/>
    <property type="match status" value="1"/>
</dbReference>
<comment type="function">
    <text evidence="1">F(1)F(0) ATP synthase produces ATP from ADP in the presence of a proton or sodium gradient. F-type ATPases consist of two structural domains, F(1) containing the extramembraneous catalytic core and F(0) containing the membrane proton channel, linked together by a central stalk and a peripheral stalk. During catalysis, ATP synthesis in the catalytic domain of F(1) is coupled via a rotary mechanism of the central stalk subunits to proton translocation.</text>
</comment>
<comment type="function">
    <text evidence="1">Component of the F(0) channel, it forms part of the peripheral stalk, linking F(1) to F(0).</text>
</comment>
<comment type="subunit">
    <text evidence="1">F-type ATPases have 2 components, F(1) - the catalytic core - and F(0) - the membrane proton channel. F(1) has five subunits: alpha(3), beta(3), gamma(1), delta(1), epsilon(1). F(0) has three main subunits: a(1), b(2) and c(10-14). The alpha and beta chains form an alternating ring which encloses part of the gamma chain. F(1) is attached to F(0) by a central stalk formed by the gamma and epsilon chains, while a peripheral stalk is formed by the delta and b chains.</text>
</comment>
<comment type="subcellular location">
    <subcellularLocation>
        <location evidence="1">Cell membrane</location>
        <topology evidence="1">Single-pass membrane protein</topology>
    </subcellularLocation>
</comment>
<comment type="similarity">
    <text evidence="1">Belongs to the ATPase B chain family.</text>
</comment>
<reference key="1">
    <citation type="journal article" date="1995" name="Gene">
        <title>The ATP synthase (F1F0) of Streptomyces lividans: sequencing of the atp operon and phylogenetic considerations with subunit beta.</title>
        <authorList>
            <person name="Hensel M."/>
            <person name="Lill H."/>
            <person name="Schmid R."/>
            <person name="Deckers-Hebestreit G."/>
            <person name="Altendorf K."/>
        </authorList>
    </citation>
    <scope>NUCLEOTIDE SEQUENCE [GENOMIC DNA]</scope>
    <source>
        <strain>66 / 1326</strain>
    </source>
</reference>
<evidence type="ECO:0000255" key="1">
    <source>
        <dbReference type="HAMAP-Rule" id="MF_01398"/>
    </source>
</evidence>
<organism>
    <name type="scientific">Streptomyces lividans</name>
    <dbReference type="NCBI Taxonomy" id="1916"/>
    <lineage>
        <taxon>Bacteria</taxon>
        <taxon>Bacillati</taxon>
        <taxon>Actinomycetota</taxon>
        <taxon>Actinomycetes</taxon>
        <taxon>Kitasatosporales</taxon>
        <taxon>Streptomycetaceae</taxon>
        <taxon>Streptomyces</taxon>
    </lineage>
</organism>
<gene>
    <name evidence="1" type="primary">atpF</name>
</gene>
<feature type="chain" id="PRO_0000082387" description="ATP synthase subunit b">
    <location>
        <begin position="1"/>
        <end position="181"/>
    </location>
</feature>
<feature type="transmembrane region" description="Helical" evidence="1">
    <location>
        <begin position="16"/>
        <end position="36"/>
    </location>
</feature>
<proteinExistence type="inferred from homology"/>
<keyword id="KW-0066">ATP synthesis</keyword>
<keyword id="KW-1003">Cell membrane</keyword>
<keyword id="KW-0138">CF(0)</keyword>
<keyword id="KW-0375">Hydrogen ion transport</keyword>
<keyword id="KW-0406">Ion transport</keyword>
<keyword id="KW-0472">Membrane</keyword>
<keyword id="KW-0812">Transmembrane</keyword>
<keyword id="KW-1133">Transmembrane helix</keyword>
<keyword id="KW-0813">Transport</keyword>
<accession>P50013</accession>
<name>ATPF_STRLI</name>
<protein>
    <recommendedName>
        <fullName evidence="1">ATP synthase subunit b</fullName>
    </recommendedName>
    <alternativeName>
        <fullName evidence="1">ATP synthase F(0) sector subunit b</fullName>
    </alternativeName>
    <alternativeName>
        <fullName evidence="1">ATPase subunit I</fullName>
    </alternativeName>
    <alternativeName>
        <fullName evidence="1">F-type ATPase subunit b</fullName>
        <shortName evidence="1">F-ATPase subunit b</shortName>
    </alternativeName>
</protein>